<dbReference type="EC" id="7.1.1.-" evidence="1"/>
<dbReference type="EMBL" id="AP009493">
    <property type="protein sequence ID" value="BAG19810.1"/>
    <property type="molecule type" value="Genomic_DNA"/>
</dbReference>
<dbReference type="RefSeq" id="WP_003967081.1">
    <property type="nucleotide sequence ID" value="NC_010572.1"/>
</dbReference>
<dbReference type="SMR" id="B1W516"/>
<dbReference type="KEGG" id="sgr:SGR_2981"/>
<dbReference type="eggNOG" id="COG0649">
    <property type="taxonomic scope" value="Bacteria"/>
</dbReference>
<dbReference type="HOGENOM" id="CLU_015134_1_2_11"/>
<dbReference type="Proteomes" id="UP000001685">
    <property type="component" value="Chromosome"/>
</dbReference>
<dbReference type="GO" id="GO:0005886">
    <property type="term" value="C:plasma membrane"/>
    <property type="evidence" value="ECO:0007669"/>
    <property type="project" value="UniProtKB-SubCell"/>
</dbReference>
<dbReference type="GO" id="GO:0051287">
    <property type="term" value="F:NAD binding"/>
    <property type="evidence" value="ECO:0007669"/>
    <property type="project" value="InterPro"/>
</dbReference>
<dbReference type="GO" id="GO:0050136">
    <property type="term" value="F:NADH:ubiquinone reductase (non-electrogenic) activity"/>
    <property type="evidence" value="ECO:0007669"/>
    <property type="project" value="UniProtKB-UniRule"/>
</dbReference>
<dbReference type="GO" id="GO:0048038">
    <property type="term" value="F:quinone binding"/>
    <property type="evidence" value="ECO:0007669"/>
    <property type="project" value="UniProtKB-KW"/>
</dbReference>
<dbReference type="Gene3D" id="1.10.645.10">
    <property type="entry name" value="Cytochrome-c3 Hydrogenase, chain B"/>
    <property type="match status" value="1"/>
</dbReference>
<dbReference type="HAMAP" id="MF_01358">
    <property type="entry name" value="NDH1_NuoD"/>
    <property type="match status" value="1"/>
</dbReference>
<dbReference type="InterPro" id="IPR001135">
    <property type="entry name" value="NADH_Q_OxRdtase_suD"/>
</dbReference>
<dbReference type="InterPro" id="IPR014029">
    <property type="entry name" value="NADH_UbQ_OxRdtase_49kDa_CS"/>
</dbReference>
<dbReference type="InterPro" id="IPR022885">
    <property type="entry name" value="NDH1_su_D/H"/>
</dbReference>
<dbReference type="InterPro" id="IPR029014">
    <property type="entry name" value="NiFe-Hase_large"/>
</dbReference>
<dbReference type="NCBIfam" id="TIGR01962">
    <property type="entry name" value="NuoD"/>
    <property type="match status" value="1"/>
</dbReference>
<dbReference type="NCBIfam" id="NF004739">
    <property type="entry name" value="PRK06075.1"/>
    <property type="match status" value="1"/>
</dbReference>
<dbReference type="PANTHER" id="PTHR11993:SF10">
    <property type="entry name" value="NADH DEHYDROGENASE [UBIQUINONE] IRON-SULFUR PROTEIN 2, MITOCHONDRIAL"/>
    <property type="match status" value="1"/>
</dbReference>
<dbReference type="PANTHER" id="PTHR11993">
    <property type="entry name" value="NADH-UBIQUINONE OXIDOREDUCTASE 49 KDA SUBUNIT"/>
    <property type="match status" value="1"/>
</dbReference>
<dbReference type="Pfam" id="PF00346">
    <property type="entry name" value="Complex1_49kDa"/>
    <property type="match status" value="1"/>
</dbReference>
<dbReference type="SUPFAM" id="SSF56762">
    <property type="entry name" value="HydB/Nqo4-like"/>
    <property type="match status" value="1"/>
</dbReference>
<dbReference type="PROSITE" id="PS00535">
    <property type="entry name" value="COMPLEX1_49K"/>
    <property type="match status" value="1"/>
</dbReference>
<gene>
    <name evidence="1" type="primary">nuoD1</name>
    <name type="ordered locus">SGR_2981</name>
</gene>
<sequence>MTTPHATPRATTEGTVYTVTGGDWDEVVESAVKSDDERIIVNMGPQHPSTHGVLRLILEIDGETVTEARCGIGYLHTGIEKNLEFRNWTQGTTFVTRMDYLTPFFNETAYCLGVEKLLGIEDQIPDRATVLRVLLMELNRLSSHLVCIATGGMELGATTIMIYGFRDRELVLDLFELFTGLRMNHAFVRPGGLAQDLPPGAVDRLREFIKTMKKNLPEYDKLATGNPIFKARMQDVGYLDLTGCMALGATGPVLRSAGLPHDLRKSDPYCGYETYDFEVPTADTCDSYGRFLIRLEEMRQSLRIIEQCIDRLEPGPVMVADKKIAWPAQLALGPDGLGNSLDHIRNIMGTSMEALIHHFKLVTEGFRVPPGQVYTAVESPKGELGVHVVSDGGTRPYRVHFRDPSFTNLQAMAAMCEGGQVADVIVAVASIDPVMGGVDR</sequence>
<protein>
    <recommendedName>
        <fullName evidence="1">NADH-quinone oxidoreductase subunit D 1</fullName>
        <ecNumber evidence="1">7.1.1.-</ecNumber>
    </recommendedName>
    <alternativeName>
        <fullName evidence="1">NADH dehydrogenase I subunit D 1</fullName>
    </alternativeName>
    <alternativeName>
        <fullName evidence="1">NDH-1 subunit D 1</fullName>
    </alternativeName>
</protein>
<evidence type="ECO:0000255" key="1">
    <source>
        <dbReference type="HAMAP-Rule" id="MF_01358"/>
    </source>
</evidence>
<feature type="chain" id="PRO_0000357941" description="NADH-quinone oxidoreductase subunit D 1">
    <location>
        <begin position="1"/>
        <end position="440"/>
    </location>
</feature>
<keyword id="KW-1003">Cell membrane</keyword>
<keyword id="KW-0472">Membrane</keyword>
<keyword id="KW-0520">NAD</keyword>
<keyword id="KW-0874">Quinone</keyword>
<keyword id="KW-1278">Translocase</keyword>
<keyword id="KW-0813">Transport</keyword>
<organism>
    <name type="scientific">Streptomyces griseus subsp. griseus (strain JCM 4626 / CBS 651.72 / NBRC 13350 / KCC S-0626 / ISP 5235)</name>
    <dbReference type="NCBI Taxonomy" id="455632"/>
    <lineage>
        <taxon>Bacteria</taxon>
        <taxon>Bacillati</taxon>
        <taxon>Actinomycetota</taxon>
        <taxon>Actinomycetes</taxon>
        <taxon>Kitasatosporales</taxon>
        <taxon>Streptomycetaceae</taxon>
        <taxon>Streptomyces</taxon>
    </lineage>
</organism>
<comment type="function">
    <text evidence="1">NDH-1 shuttles electrons from NADH, via FMN and iron-sulfur (Fe-S) centers, to quinones in the respiratory chain. The immediate electron acceptor for the enzyme in this species is believed to be a menaquinone. Couples the redox reaction to proton translocation (for every two electrons transferred, four hydrogen ions are translocated across the cytoplasmic membrane), and thus conserves the redox energy in a proton gradient.</text>
</comment>
<comment type="catalytic activity">
    <reaction evidence="1">
        <text>a quinone + NADH + 5 H(+)(in) = a quinol + NAD(+) + 4 H(+)(out)</text>
        <dbReference type="Rhea" id="RHEA:57888"/>
        <dbReference type="ChEBI" id="CHEBI:15378"/>
        <dbReference type="ChEBI" id="CHEBI:24646"/>
        <dbReference type="ChEBI" id="CHEBI:57540"/>
        <dbReference type="ChEBI" id="CHEBI:57945"/>
        <dbReference type="ChEBI" id="CHEBI:132124"/>
    </reaction>
</comment>
<comment type="subunit">
    <text evidence="1">NDH-1 is composed of 14 different subunits. Subunits NuoB, C, D, E, F, and G constitute the peripheral sector of the complex.</text>
</comment>
<comment type="subcellular location">
    <subcellularLocation>
        <location evidence="1">Cell membrane</location>
        <topology evidence="1">Peripheral membrane protein</topology>
        <orientation evidence="1">Cytoplasmic side</orientation>
    </subcellularLocation>
</comment>
<comment type="similarity">
    <text evidence="1">Belongs to the complex I 49 kDa subunit family.</text>
</comment>
<reference key="1">
    <citation type="journal article" date="2008" name="J. Bacteriol.">
        <title>Genome sequence of the streptomycin-producing microorganism Streptomyces griseus IFO 13350.</title>
        <authorList>
            <person name="Ohnishi Y."/>
            <person name="Ishikawa J."/>
            <person name="Hara H."/>
            <person name="Suzuki H."/>
            <person name="Ikenoya M."/>
            <person name="Ikeda H."/>
            <person name="Yamashita A."/>
            <person name="Hattori M."/>
            <person name="Horinouchi S."/>
        </authorList>
    </citation>
    <scope>NUCLEOTIDE SEQUENCE [LARGE SCALE GENOMIC DNA]</scope>
    <source>
        <strain>JCM 4626 / CBS 651.72 / NBRC 13350 / KCC S-0626 / ISP 5235</strain>
    </source>
</reference>
<accession>B1W516</accession>
<name>NUOD1_STRGG</name>
<proteinExistence type="inferred from homology"/>